<evidence type="ECO:0000255" key="1">
    <source>
        <dbReference type="HAMAP-Rule" id="MF_00300"/>
    </source>
</evidence>
<protein>
    <recommendedName>
        <fullName evidence="1">Chorismate synthase</fullName>
        <shortName evidence="1">CS</shortName>
        <ecNumber evidence="1">4.2.3.5</ecNumber>
    </recommendedName>
    <alternativeName>
        <fullName evidence="1">5-enolpyruvylshikimate-3-phosphate phospholyase</fullName>
    </alternativeName>
</protein>
<sequence length="366" mass="39441">MSGNTIGKLFTVTTFGESHGPALGCIVDGCPPGLALSEADLQHDLYRRRPGQSRHTTQRRESDTVKILSGVFEGLTTGTPIGLLIENEDQRSKDYASIADRFRPGHADYTYHMKYGFRDYRGGGRSSARETAMRVAAGGIAKKYLRERLGVEIRGYLAQLGPIRIDPVDWNAIDDNPFFCPDPARVPELEAYMDALRKEGDSSGARVNVVARGVPPGLGEPVFDRLDAELAYALMSINAVKGVEIGAGFGCVEAKGSVFRDEMSPEGFLGNSAGGILGGISTGQDIVASIALKPTSSLRLPGRSVNIRGESVEVVTTGRHDPCVGIRATPIAEAMMAIVLMDHYLRHRGQNQDVVRTLDPIPPSAF</sequence>
<proteinExistence type="inferred from homology"/>
<gene>
    <name evidence="1" type="primary">aroC</name>
    <name type="ordered locus">MCA0702</name>
</gene>
<feature type="chain" id="PRO_0000140610" description="Chorismate synthase">
    <location>
        <begin position="1"/>
        <end position="366"/>
    </location>
</feature>
<feature type="binding site" evidence="1">
    <location>
        <position position="48"/>
    </location>
    <ligand>
        <name>NADP(+)</name>
        <dbReference type="ChEBI" id="CHEBI:58349"/>
    </ligand>
</feature>
<feature type="binding site" evidence="1">
    <location>
        <position position="54"/>
    </location>
    <ligand>
        <name>NADP(+)</name>
        <dbReference type="ChEBI" id="CHEBI:58349"/>
    </ligand>
</feature>
<feature type="binding site" evidence="1">
    <location>
        <begin position="125"/>
        <end position="127"/>
    </location>
    <ligand>
        <name>FMN</name>
        <dbReference type="ChEBI" id="CHEBI:58210"/>
    </ligand>
</feature>
<feature type="binding site" evidence="1">
    <location>
        <begin position="238"/>
        <end position="239"/>
    </location>
    <ligand>
        <name>FMN</name>
        <dbReference type="ChEBI" id="CHEBI:58210"/>
    </ligand>
</feature>
<feature type="binding site" evidence="1">
    <location>
        <position position="278"/>
    </location>
    <ligand>
        <name>FMN</name>
        <dbReference type="ChEBI" id="CHEBI:58210"/>
    </ligand>
</feature>
<feature type="binding site" evidence="1">
    <location>
        <begin position="293"/>
        <end position="297"/>
    </location>
    <ligand>
        <name>FMN</name>
        <dbReference type="ChEBI" id="CHEBI:58210"/>
    </ligand>
</feature>
<feature type="binding site" evidence="1">
    <location>
        <position position="319"/>
    </location>
    <ligand>
        <name>FMN</name>
        <dbReference type="ChEBI" id="CHEBI:58210"/>
    </ligand>
</feature>
<organism>
    <name type="scientific">Methylococcus capsulatus (strain ATCC 33009 / NCIMB 11132 / Bath)</name>
    <dbReference type="NCBI Taxonomy" id="243233"/>
    <lineage>
        <taxon>Bacteria</taxon>
        <taxon>Pseudomonadati</taxon>
        <taxon>Pseudomonadota</taxon>
        <taxon>Gammaproteobacteria</taxon>
        <taxon>Methylococcales</taxon>
        <taxon>Methylococcaceae</taxon>
        <taxon>Methylococcus</taxon>
    </lineage>
</organism>
<dbReference type="EC" id="4.2.3.5" evidence="1"/>
<dbReference type="EMBL" id="AE017282">
    <property type="protein sequence ID" value="AAU93160.1"/>
    <property type="molecule type" value="Genomic_DNA"/>
</dbReference>
<dbReference type="RefSeq" id="WP_010960040.1">
    <property type="nucleotide sequence ID" value="NC_002977.6"/>
</dbReference>
<dbReference type="SMR" id="Q60AY5"/>
<dbReference type="STRING" id="243233.MCA0702"/>
<dbReference type="GeneID" id="88223022"/>
<dbReference type="KEGG" id="mca:MCA0702"/>
<dbReference type="eggNOG" id="COG0082">
    <property type="taxonomic scope" value="Bacteria"/>
</dbReference>
<dbReference type="HOGENOM" id="CLU_034547_0_2_6"/>
<dbReference type="UniPathway" id="UPA00053">
    <property type="reaction ID" value="UER00090"/>
</dbReference>
<dbReference type="Proteomes" id="UP000006821">
    <property type="component" value="Chromosome"/>
</dbReference>
<dbReference type="GO" id="GO:0005829">
    <property type="term" value="C:cytosol"/>
    <property type="evidence" value="ECO:0007669"/>
    <property type="project" value="TreeGrafter"/>
</dbReference>
<dbReference type="GO" id="GO:0004107">
    <property type="term" value="F:chorismate synthase activity"/>
    <property type="evidence" value="ECO:0007669"/>
    <property type="project" value="UniProtKB-UniRule"/>
</dbReference>
<dbReference type="GO" id="GO:0010181">
    <property type="term" value="F:FMN binding"/>
    <property type="evidence" value="ECO:0007669"/>
    <property type="project" value="TreeGrafter"/>
</dbReference>
<dbReference type="GO" id="GO:0008652">
    <property type="term" value="P:amino acid biosynthetic process"/>
    <property type="evidence" value="ECO:0007669"/>
    <property type="project" value="UniProtKB-KW"/>
</dbReference>
<dbReference type="GO" id="GO:0009073">
    <property type="term" value="P:aromatic amino acid family biosynthetic process"/>
    <property type="evidence" value="ECO:0007669"/>
    <property type="project" value="UniProtKB-KW"/>
</dbReference>
<dbReference type="GO" id="GO:0009423">
    <property type="term" value="P:chorismate biosynthetic process"/>
    <property type="evidence" value="ECO:0007669"/>
    <property type="project" value="UniProtKB-UniRule"/>
</dbReference>
<dbReference type="CDD" id="cd07304">
    <property type="entry name" value="Chorismate_synthase"/>
    <property type="match status" value="1"/>
</dbReference>
<dbReference type="FunFam" id="3.60.150.10:FF:000001">
    <property type="entry name" value="Chorismate synthase"/>
    <property type="match status" value="1"/>
</dbReference>
<dbReference type="Gene3D" id="3.60.150.10">
    <property type="entry name" value="Chorismate synthase AroC"/>
    <property type="match status" value="1"/>
</dbReference>
<dbReference type="HAMAP" id="MF_00300">
    <property type="entry name" value="Chorismate_synth"/>
    <property type="match status" value="1"/>
</dbReference>
<dbReference type="InterPro" id="IPR000453">
    <property type="entry name" value="Chorismate_synth"/>
</dbReference>
<dbReference type="InterPro" id="IPR035904">
    <property type="entry name" value="Chorismate_synth_AroC_sf"/>
</dbReference>
<dbReference type="InterPro" id="IPR020541">
    <property type="entry name" value="Chorismate_synthase_CS"/>
</dbReference>
<dbReference type="NCBIfam" id="TIGR00033">
    <property type="entry name" value="aroC"/>
    <property type="match status" value="1"/>
</dbReference>
<dbReference type="NCBIfam" id="NF003793">
    <property type="entry name" value="PRK05382.1"/>
    <property type="match status" value="1"/>
</dbReference>
<dbReference type="PANTHER" id="PTHR21085">
    <property type="entry name" value="CHORISMATE SYNTHASE"/>
    <property type="match status" value="1"/>
</dbReference>
<dbReference type="PANTHER" id="PTHR21085:SF0">
    <property type="entry name" value="CHORISMATE SYNTHASE"/>
    <property type="match status" value="1"/>
</dbReference>
<dbReference type="Pfam" id="PF01264">
    <property type="entry name" value="Chorismate_synt"/>
    <property type="match status" value="1"/>
</dbReference>
<dbReference type="PIRSF" id="PIRSF001456">
    <property type="entry name" value="Chorismate_synth"/>
    <property type="match status" value="1"/>
</dbReference>
<dbReference type="SUPFAM" id="SSF103263">
    <property type="entry name" value="Chorismate synthase, AroC"/>
    <property type="match status" value="1"/>
</dbReference>
<dbReference type="PROSITE" id="PS00787">
    <property type="entry name" value="CHORISMATE_SYNTHASE_1"/>
    <property type="match status" value="1"/>
</dbReference>
<dbReference type="PROSITE" id="PS00789">
    <property type="entry name" value="CHORISMATE_SYNTHASE_3"/>
    <property type="match status" value="1"/>
</dbReference>
<reference key="1">
    <citation type="journal article" date="2004" name="PLoS Biol.">
        <title>Genomic insights into methanotrophy: the complete genome sequence of Methylococcus capsulatus (Bath).</title>
        <authorList>
            <person name="Ward N.L."/>
            <person name="Larsen O."/>
            <person name="Sakwa J."/>
            <person name="Bruseth L."/>
            <person name="Khouri H.M."/>
            <person name="Durkin A.S."/>
            <person name="Dimitrov G."/>
            <person name="Jiang L."/>
            <person name="Scanlan D."/>
            <person name="Kang K.H."/>
            <person name="Lewis M.R."/>
            <person name="Nelson K.E."/>
            <person name="Methe B.A."/>
            <person name="Wu M."/>
            <person name="Heidelberg J.F."/>
            <person name="Paulsen I.T."/>
            <person name="Fouts D.E."/>
            <person name="Ravel J."/>
            <person name="Tettelin H."/>
            <person name="Ren Q."/>
            <person name="Read T.D."/>
            <person name="DeBoy R.T."/>
            <person name="Seshadri R."/>
            <person name="Salzberg S.L."/>
            <person name="Jensen H.B."/>
            <person name="Birkeland N.K."/>
            <person name="Nelson W.C."/>
            <person name="Dodson R.J."/>
            <person name="Grindhaug S.H."/>
            <person name="Holt I.E."/>
            <person name="Eidhammer I."/>
            <person name="Jonasen I."/>
            <person name="Vanaken S."/>
            <person name="Utterback T.R."/>
            <person name="Feldblyum T.V."/>
            <person name="Fraser C.M."/>
            <person name="Lillehaug J.R."/>
            <person name="Eisen J.A."/>
        </authorList>
    </citation>
    <scope>NUCLEOTIDE SEQUENCE [LARGE SCALE GENOMIC DNA]</scope>
    <source>
        <strain>ATCC 33009 / NCIMB 11132 / Bath</strain>
    </source>
</reference>
<comment type="function">
    <text evidence="1">Catalyzes the anti-1,4-elimination of the C-3 phosphate and the C-6 proR hydrogen from 5-enolpyruvylshikimate-3-phosphate (EPSP) to yield chorismate, which is the branch point compound that serves as the starting substrate for the three terminal pathways of aromatic amino acid biosynthesis. This reaction introduces a second double bond into the aromatic ring system.</text>
</comment>
<comment type="catalytic activity">
    <reaction evidence="1">
        <text>5-O-(1-carboxyvinyl)-3-phosphoshikimate = chorismate + phosphate</text>
        <dbReference type="Rhea" id="RHEA:21020"/>
        <dbReference type="ChEBI" id="CHEBI:29748"/>
        <dbReference type="ChEBI" id="CHEBI:43474"/>
        <dbReference type="ChEBI" id="CHEBI:57701"/>
        <dbReference type="EC" id="4.2.3.5"/>
    </reaction>
</comment>
<comment type="cofactor">
    <cofactor evidence="1">
        <name>FMNH2</name>
        <dbReference type="ChEBI" id="CHEBI:57618"/>
    </cofactor>
    <text evidence="1">Reduced FMN (FMNH(2)).</text>
</comment>
<comment type="pathway">
    <text evidence="1">Metabolic intermediate biosynthesis; chorismate biosynthesis; chorismate from D-erythrose 4-phosphate and phosphoenolpyruvate: step 7/7.</text>
</comment>
<comment type="subunit">
    <text evidence="1">Homotetramer.</text>
</comment>
<comment type="similarity">
    <text evidence="1">Belongs to the chorismate synthase family.</text>
</comment>
<keyword id="KW-0028">Amino-acid biosynthesis</keyword>
<keyword id="KW-0057">Aromatic amino acid biosynthesis</keyword>
<keyword id="KW-0274">FAD</keyword>
<keyword id="KW-0285">Flavoprotein</keyword>
<keyword id="KW-0288">FMN</keyword>
<keyword id="KW-0456">Lyase</keyword>
<keyword id="KW-0521">NADP</keyword>
<keyword id="KW-1185">Reference proteome</keyword>
<name>AROC_METCA</name>
<accession>Q60AY5</accession>